<protein>
    <recommendedName>
        <fullName evidence="1">Large ribosomal subunit protein uL3</fullName>
    </recommendedName>
    <alternativeName>
        <fullName evidence="2">50S ribosomal protein L3</fullName>
    </alternativeName>
</protein>
<comment type="function">
    <text evidence="1">One of the primary rRNA binding proteins, it binds directly near the 3'-end of the 23S rRNA, where it nucleates assembly of the 50S subunit.</text>
</comment>
<comment type="subunit">
    <text evidence="1">Part of the 50S ribosomal subunit. Forms a cluster with proteins L14 and L19.</text>
</comment>
<comment type="similarity">
    <text evidence="1">Belongs to the universal ribosomal protein uL3 family.</text>
</comment>
<name>RL3_LACPL</name>
<organism>
    <name type="scientific">Lactiplantibacillus plantarum (strain ATCC BAA-793 / NCIMB 8826 / WCFS1)</name>
    <name type="common">Lactobacillus plantarum</name>
    <dbReference type="NCBI Taxonomy" id="220668"/>
    <lineage>
        <taxon>Bacteria</taxon>
        <taxon>Bacillati</taxon>
        <taxon>Bacillota</taxon>
        <taxon>Bacilli</taxon>
        <taxon>Lactobacillales</taxon>
        <taxon>Lactobacillaceae</taxon>
        <taxon>Lactiplantibacillus</taxon>
    </lineage>
</organism>
<gene>
    <name evidence="1" type="primary">rplC</name>
    <name type="ordered locus">lp_1033</name>
</gene>
<sequence>MTTKGILGKKVGMTQVFTESGELVPVTVVEVQPNVVLQVKTVENDGYEAIQLGVDDKREVLTNKPAQGHAAKAKTTPKRFIREIRNVELGDYTVGDEVKADIFAAGDAVDVTGITKGHGYQGNIHKDGQSRGPMAHGSRYHRRPGSMGAIINRVFKGKKLPGRMGNHQRTMQNLQIVRADVENNVLLIKGNVPGANKSFVTVKTSVKSK</sequence>
<evidence type="ECO:0000255" key="1">
    <source>
        <dbReference type="HAMAP-Rule" id="MF_01325"/>
    </source>
</evidence>
<evidence type="ECO:0000305" key="2"/>
<accession>Q88XY6</accession>
<accession>F9UMK5</accession>
<proteinExistence type="inferred from homology"/>
<feature type="chain" id="PRO_0000077111" description="Large ribosomal subunit protein uL3">
    <location>
        <begin position="1"/>
        <end position="209"/>
    </location>
</feature>
<dbReference type="EMBL" id="AL935263">
    <property type="protein sequence ID" value="CCC78444.1"/>
    <property type="molecule type" value="Genomic_DNA"/>
</dbReference>
<dbReference type="RefSeq" id="WP_003641252.1">
    <property type="nucleotide sequence ID" value="NC_004567.2"/>
</dbReference>
<dbReference type="RefSeq" id="YP_004888958.1">
    <property type="nucleotide sequence ID" value="NC_004567.2"/>
</dbReference>
<dbReference type="SMR" id="Q88XY6"/>
<dbReference type="STRING" id="220668.lp_1033"/>
<dbReference type="EnsemblBacteria" id="CCC78444">
    <property type="protein sequence ID" value="CCC78444"/>
    <property type="gene ID" value="lp_1033"/>
</dbReference>
<dbReference type="GeneID" id="77217518"/>
<dbReference type="KEGG" id="lpl:lp_1033"/>
<dbReference type="PATRIC" id="fig|220668.9.peg.871"/>
<dbReference type="eggNOG" id="COG0087">
    <property type="taxonomic scope" value="Bacteria"/>
</dbReference>
<dbReference type="HOGENOM" id="CLU_044142_4_1_9"/>
<dbReference type="OrthoDB" id="9806135at2"/>
<dbReference type="PhylomeDB" id="Q88XY6"/>
<dbReference type="Proteomes" id="UP000000432">
    <property type="component" value="Chromosome"/>
</dbReference>
<dbReference type="GO" id="GO:0022625">
    <property type="term" value="C:cytosolic large ribosomal subunit"/>
    <property type="evidence" value="ECO:0007669"/>
    <property type="project" value="TreeGrafter"/>
</dbReference>
<dbReference type="GO" id="GO:0019843">
    <property type="term" value="F:rRNA binding"/>
    <property type="evidence" value="ECO:0007669"/>
    <property type="project" value="UniProtKB-UniRule"/>
</dbReference>
<dbReference type="GO" id="GO:0003735">
    <property type="term" value="F:structural constituent of ribosome"/>
    <property type="evidence" value="ECO:0007669"/>
    <property type="project" value="InterPro"/>
</dbReference>
<dbReference type="GO" id="GO:0006412">
    <property type="term" value="P:translation"/>
    <property type="evidence" value="ECO:0007669"/>
    <property type="project" value="UniProtKB-UniRule"/>
</dbReference>
<dbReference type="FunFam" id="2.40.30.10:FF:000004">
    <property type="entry name" value="50S ribosomal protein L3"/>
    <property type="match status" value="1"/>
</dbReference>
<dbReference type="FunFam" id="3.30.160.810:FF:000002">
    <property type="entry name" value="50S ribosomal protein L3"/>
    <property type="match status" value="1"/>
</dbReference>
<dbReference type="Gene3D" id="3.30.160.810">
    <property type="match status" value="1"/>
</dbReference>
<dbReference type="Gene3D" id="2.40.30.10">
    <property type="entry name" value="Translation factors"/>
    <property type="match status" value="1"/>
</dbReference>
<dbReference type="HAMAP" id="MF_01325_B">
    <property type="entry name" value="Ribosomal_uL3_B"/>
    <property type="match status" value="1"/>
</dbReference>
<dbReference type="InterPro" id="IPR000597">
    <property type="entry name" value="Ribosomal_uL3"/>
</dbReference>
<dbReference type="InterPro" id="IPR019927">
    <property type="entry name" value="Ribosomal_uL3_bac/org-type"/>
</dbReference>
<dbReference type="InterPro" id="IPR009000">
    <property type="entry name" value="Transl_B-barrel_sf"/>
</dbReference>
<dbReference type="NCBIfam" id="TIGR03625">
    <property type="entry name" value="L3_bact"/>
    <property type="match status" value="1"/>
</dbReference>
<dbReference type="PANTHER" id="PTHR11229">
    <property type="entry name" value="50S RIBOSOMAL PROTEIN L3"/>
    <property type="match status" value="1"/>
</dbReference>
<dbReference type="PANTHER" id="PTHR11229:SF16">
    <property type="entry name" value="LARGE RIBOSOMAL SUBUNIT PROTEIN UL3C"/>
    <property type="match status" value="1"/>
</dbReference>
<dbReference type="Pfam" id="PF00297">
    <property type="entry name" value="Ribosomal_L3"/>
    <property type="match status" value="1"/>
</dbReference>
<dbReference type="SUPFAM" id="SSF50447">
    <property type="entry name" value="Translation proteins"/>
    <property type="match status" value="1"/>
</dbReference>
<reference key="1">
    <citation type="journal article" date="2003" name="Proc. Natl. Acad. Sci. U.S.A.">
        <title>Complete genome sequence of Lactobacillus plantarum WCFS1.</title>
        <authorList>
            <person name="Kleerebezem M."/>
            <person name="Boekhorst J."/>
            <person name="van Kranenburg R."/>
            <person name="Molenaar D."/>
            <person name="Kuipers O.P."/>
            <person name="Leer R."/>
            <person name="Tarchini R."/>
            <person name="Peters S.A."/>
            <person name="Sandbrink H.M."/>
            <person name="Fiers M.W.E.J."/>
            <person name="Stiekema W."/>
            <person name="Klein Lankhorst R.M."/>
            <person name="Bron P.A."/>
            <person name="Hoffer S.M."/>
            <person name="Nierop Groot M.N."/>
            <person name="Kerkhoven R."/>
            <person name="De Vries M."/>
            <person name="Ursing B."/>
            <person name="De Vos W.M."/>
            <person name="Siezen R.J."/>
        </authorList>
    </citation>
    <scope>NUCLEOTIDE SEQUENCE [LARGE SCALE GENOMIC DNA]</scope>
    <source>
        <strain>ATCC BAA-793 / NCIMB 8826 / WCFS1</strain>
    </source>
</reference>
<reference key="2">
    <citation type="journal article" date="2012" name="J. Bacteriol.">
        <title>Complete resequencing and reannotation of the Lactobacillus plantarum WCFS1 genome.</title>
        <authorList>
            <person name="Siezen R.J."/>
            <person name="Francke C."/>
            <person name="Renckens B."/>
            <person name="Boekhorst J."/>
            <person name="Wels M."/>
            <person name="Kleerebezem M."/>
            <person name="van Hijum S.A."/>
        </authorList>
    </citation>
    <scope>NUCLEOTIDE SEQUENCE [LARGE SCALE GENOMIC DNA]</scope>
    <scope>GENOME REANNOTATION</scope>
    <source>
        <strain>ATCC BAA-793 / NCIMB 8826 / WCFS1</strain>
    </source>
</reference>
<keyword id="KW-1185">Reference proteome</keyword>
<keyword id="KW-0687">Ribonucleoprotein</keyword>
<keyword id="KW-0689">Ribosomal protein</keyword>
<keyword id="KW-0694">RNA-binding</keyword>
<keyword id="KW-0699">rRNA-binding</keyword>